<protein>
    <recommendedName>
        <fullName evidence="15">Acidic leucine-rich nuclear phosphoprotein 32 family member B</fullName>
    </recommendedName>
    <alternativeName>
        <fullName>Acidic protein rich in leucines</fullName>
    </alternativeName>
    <alternativeName>
        <fullName>Putative HLA-DR-associated protein I-2</fullName>
        <shortName>PHAPI2</shortName>
    </alternativeName>
    <alternativeName>
        <fullName>Silver-stainable protein SSP29</fullName>
    </alternativeName>
</protein>
<keyword id="KW-0002">3D-structure</keyword>
<keyword id="KW-0007">Acetylation</keyword>
<keyword id="KW-0025">Alternative splicing</keyword>
<keyword id="KW-0143">Chaperone</keyword>
<keyword id="KW-0963">Cytoplasm</keyword>
<keyword id="KW-0945">Host-virus interaction</keyword>
<keyword id="KW-0433">Leucine-rich repeat</keyword>
<keyword id="KW-0539">Nucleus</keyword>
<keyword id="KW-0597">Phosphoprotein</keyword>
<keyword id="KW-1267">Proteomics identification</keyword>
<keyword id="KW-1185">Reference proteome</keyword>
<keyword id="KW-0677">Repeat</keyword>
<feature type="chain" id="PRO_0000137595" description="Acidic leucine-rich nuclear phosphoprotein 32 family member B">
    <location>
        <begin position="1"/>
        <end position="251"/>
    </location>
</feature>
<feature type="repeat" description="LRR 1" evidence="8">
    <location>
        <begin position="16"/>
        <end position="40"/>
    </location>
</feature>
<feature type="repeat" description="LRR 2" evidence="8">
    <location>
        <begin position="43"/>
        <end position="64"/>
    </location>
</feature>
<feature type="repeat" description="LRR 3" evidence="8">
    <location>
        <begin position="65"/>
        <end position="84"/>
    </location>
</feature>
<feature type="repeat" description="LRR 4" evidence="8">
    <location>
        <begin position="89"/>
        <end position="110"/>
    </location>
</feature>
<feature type="domain" description="LRRCT">
    <location>
        <begin position="123"/>
        <end position="161"/>
    </location>
</feature>
<feature type="region of interest" description="Disordered" evidence="4">
    <location>
        <begin position="149"/>
        <end position="251"/>
    </location>
</feature>
<feature type="short sequence motif" description="Nuclear localization signal" evidence="5">
    <location>
        <begin position="239"/>
        <end position="242"/>
    </location>
</feature>
<feature type="compositionally biased region" description="Acidic residues" evidence="4">
    <location>
        <begin position="149"/>
        <end position="233"/>
    </location>
</feature>
<feature type="compositionally biased region" description="Basic and acidic residues" evidence="4">
    <location>
        <begin position="234"/>
        <end position="244"/>
    </location>
</feature>
<feature type="modified residue" description="N6-acetyllysine" evidence="20">
    <location>
        <position position="86"/>
    </location>
</feature>
<feature type="modified residue" description="Phosphoserine" evidence="3">
    <location>
        <position position="158"/>
    </location>
</feature>
<feature type="modified residue" description="Phosphothreonine" evidence="5 18 19 21 22 23 24">
    <location>
        <position position="244"/>
    </location>
</feature>
<feature type="splice variant" id="VSP_019304" description="In isoform 2." evidence="16">
    <location>
        <begin position="196"/>
        <end position="251"/>
    </location>
</feature>
<feature type="mutagenesis site" description="Complete loss of cleavage by CASP3." evidence="7">
    <original>D</original>
    <variation>A</variation>
    <location>
        <position position="163"/>
    </location>
</feature>
<feature type="sequence conflict" description="In Ref. 3; CAA69265." evidence="17" ref="3">
    <location>
        <begin position="1"/>
        <end position="2"/>
    </location>
</feature>
<feature type="helix" evidence="27">
    <location>
        <begin position="3"/>
        <end position="11"/>
    </location>
</feature>
<feature type="helix" evidence="27">
    <location>
        <begin position="16"/>
        <end position="18"/>
    </location>
</feature>
<feature type="strand" evidence="27">
    <location>
        <begin position="20"/>
        <end position="23"/>
    </location>
</feature>
<feature type="strand" evidence="26">
    <location>
        <begin position="30"/>
        <end position="33"/>
    </location>
</feature>
<feature type="helix" evidence="25">
    <location>
        <begin position="39"/>
        <end position="43"/>
    </location>
</feature>
<feature type="strand" evidence="27">
    <location>
        <begin position="46"/>
        <end position="48"/>
    </location>
</feature>
<feature type="strand" evidence="27">
    <location>
        <begin position="68"/>
        <end position="70"/>
    </location>
</feature>
<feature type="helix" evidence="27">
    <location>
        <begin position="81"/>
        <end position="86"/>
    </location>
</feature>
<feature type="strand" evidence="27">
    <location>
        <begin position="92"/>
        <end position="94"/>
    </location>
</feature>
<feature type="strand" evidence="25">
    <location>
        <begin position="96"/>
        <end position="99"/>
    </location>
</feature>
<feature type="helix" evidence="27">
    <location>
        <begin position="103"/>
        <end position="111"/>
    </location>
</feature>
<feature type="strand" evidence="27">
    <location>
        <begin position="117"/>
        <end position="119"/>
    </location>
</feature>
<feature type="helix" evidence="27">
    <location>
        <begin position="124"/>
        <end position="127"/>
    </location>
</feature>
<feature type="helix" evidence="27">
    <location>
        <begin position="131"/>
        <end position="138"/>
    </location>
</feature>
<feature type="strand" evidence="26">
    <location>
        <begin position="150"/>
        <end position="152"/>
    </location>
</feature>
<feature type="strand" evidence="25">
    <location>
        <begin position="157"/>
        <end position="159"/>
    </location>
</feature>
<gene>
    <name type="primary">ANP32B</name>
    <name type="synonym">APRIL</name>
    <name type="synonym">PHAPI2</name>
</gene>
<organism>
    <name type="scientific">Homo sapiens</name>
    <name type="common">Human</name>
    <dbReference type="NCBI Taxonomy" id="9606"/>
    <lineage>
        <taxon>Eukaryota</taxon>
        <taxon>Metazoa</taxon>
        <taxon>Chordata</taxon>
        <taxon>Craniata</taxon>
        <taxon>Vertebrata</taxon>
        <taxon>Euteleostomi</taxon>
        <taxon>Mammalia</taxon>
        <taxon>Eutheria</taxon>
        <taxon>Euarchontoglires</taxon>
        <taxon>Primates</taxon>
        <taxon>Haplorrhini</taxon>
        <taxon>Catarrhini</taxon>
        <taxon>Hominidae</taxon>
        <taxon>Homo</taxon>
    </lineage>
</organism>
<accession>Q92688</accession>
<accession>B2R9C7</accession>
<accession>O00655</accession>
<accession>P78458</accession>
<accession>P78459</accession>
<proteinExistence type="evidence at protein level"/>
<sequence length="251" mass="28788">MDMKRRIHLELRNRTPAAVRELVLDNCKSNDGKIEGLTAEFVNLEFLSLINVGLISVSNLPKLPKLKKLELSENRIFGGLDMLAEKLPNLTHLNLSGNKLKDISTLEPLKKLECLKSLDLFNCEVTNLNDYRESVFKLLPQLTYLDGYDREDQEAPDSDAEVDGVDEEEEDEEGEDEEDEDDEDGEEEEFDEEDDEDEDVEGDEDDDEVSEEEEEFGLDEEDEDEDEDEEEEEGGKGEKRKRETDDEGEDD</sequence>
<reference key="1">
    <citation type="submission" date="1996-08" db="EMBL/GenBank/DDBJ databases">
        <authorList>
            <person name="Vaesen M."/>
            <person name="Barnikol-Watanabe S."/>
            <person name="Kratzin H.D."/>
            <person name="Hilschmann N."/>
        </authorList>
    </citation>
    <scope>NUCLEOTIDE SEQUENCE [MRNA] (ISOFORM 1)</scope>
</reference>
<reference key="2">
    <citation type="submission" date="1996-12" db="EMBL/GenBank/DDBJ databases">
        <title>Molecular cloning and partial characterization of a new silver-stainable protein.</title>
        <authorList>
            <person name="Zhu L."/>
            <person name="Henning D."/>
            <person name="Valdez B.C."/>
        </authorList>
    </citation>
    <scope>NUCLEOTIDE SEQUENCE [MRNA] (ISOFORM 1)</scope>
</reference>
<reference key="3">
    <citation type="journal article" date="1998" name="Biochim. Biophys. Acta">
        <title>Expression analysis and chromosomal mapping of a novel human gene, APRIL, encoding an acidic protein rich in leucines.</title>
        <authorList>
            <person name="Mencinger M."/>
            <person name="Panagopoulos I."/>
            <person name="Contreras J.A."/>
            <person name="Mitelman F."/>
            <person name="Aman P."/>
        </authorList>
    </citation>
    <scope>NUCLEOTIDE SEQUENCE [MRNA] (ISOFORMS 1 AND 2)</scope>
    <scope>TISSUE SPECIFICITY</scope>
    <source>
        <tissue>Pancreas</tissue>
    </source>
</reference>
<reference key="4">
    <citation type="journal article" date="2004" name="Nat. Genet.">
        <title>Complete sequencing and characterization of 21,243 full-length human cDNAs.</title>
        <authorList>
            <person name="Ota T."/>
            <person name="Suzuki Y."/>
            <person name="Nishikawa T."/>
            <person name="Otsuki T."/>
            <person name="Sugiyama T."/>
            <person name="Irie R."/>
            <person name="Wakamatsu A."/>
            <person name="Hayashi K."/>
            <person name="Sato H."/>
            <person name="Nagai K."/>
            <person name="Kimura K."/>
            <person name="Makita H."/>
            <person name="Sekine M."/>
            <person name="Obayashi M."/>
            <person name="Nishi T."/>
            <person name="Shibahara T."/>
            <person name="Tanaka T."/>
            <person name="Ishii S."/>
            <person name="Yamamoto J."/>
            <person name="Saito K."/>
            <person name="Kawai Y."/>
            <person name="Isono Y."/>
            <person name="Nakamura Y."/>
            <person name="Nagahari K."/>
            <person name="Murakami K."/>
            <person name="Yasuda T."/>
            <person name="Iwayanagi T."/>
            <person name="Wagatsuma M."/>
            <person name="Shiratori A."/>
            <person name="Sudo H."/>
            <person name="Hosoiri T."/>
            <person name="Kaku Y."/>
            <person name="Kodaira H."/>
            <person name="Kondo H."/>
            <person name="Sugawara M."/>
            <person name="Takahashi M."/>
            <person name="Kanda K."/>
            <person name="Yokoi T."/>
            <person name="Furuya T."/>
            <person name="Kikkawa E."/>
            <person name="Omura Y."/>
            <person name="Abe K."/>
            <person name="Kamihara K."/>
            <person name="Katsuta N."/>
            <person name="Sato K."/>
            <person name="Tanikawa M."/>
            <person name="Yamazaki M."/>
            <person name="Ninomiya K."/>
            <person name="Ishibashi T."/>
            <person name="Yamashita H."/>
            <person name="Murakawa K."/>
            <person name="Fujimori K."/>
            <person name="Tanai H."/>
            <person name="Kimata M."/>
            <person name="Watanabe M."/>
            <person name="Hiraoka S."/>
            <person name="Chiba Y."/>
            <person name="Ishida S."/>
            <person name="Ono Y."/>
            <person name="Takiguchi S."/>
            <person name="Watanabe S."/>
            <person name="Yosida M."/>
            <person name="Hotuta T."/>
            <person name="Kusano J."/>
            <person name="Kanehori K."/>
            <person name="Takahashi-Fujii A."/>
            <person name="Hara H."/>
            <person name="Tanase T.-O."/>
            <person name="Nomura Y."/>
            <person name="Togiya S."/>
            <person name="Komai F."/>
            <person name="Hara R."/>
            <person name="Takeuchi K."/>
            <person name="Arita M."/>
            <person name="Imose N."/>
            <person name="Musashino K."/>
            <person name="Yuuki H."/>
            <person name="Oshima A."/>
            <person name="Sasaki N."/>
            <person name="Aotsuka S."/>
            <person name="Yoshikawa Y."/>
            <person name="Matsunawa H."/>
            <person name="Ichihara T."/>
            <person name="Shiohata N."/>
            <person name="Sano S."/>
            <person name="Moriya S."/>
            <person name="Momiyama H."/>
            <person name="Satoh N."/>
            <person name="Takami S."/>
            <person name="Terashima Y."/>
            <person name="Suzuki O."/>
            <person name="Nakagawa S."/>
            <person name="Senoh A."/>
            <person name="Mizoguchi H."/>
            <person name="Goto Y."/>
            <person name="Shimizu F."/>
            <person name="Wakebe H."/>
            <person name="Hishigaki H."/>
            <person name="Watanabe T."/>
            <person name="Sugiyama A."/>
            <person name="Takemoto M."/>
            <person name="Kawakami B."/>
            <person name="Yamazaki M."/>
            <person name="Watanabe K."/>
            <person name="Kumagai A."/>
            <person name="Itakura S."/>
            <person name="Fukuzumi Y."/>
            <person name="Fujimori Y."/>
            <person name="Komiyama M."/>
            <person name="Tashiro H."/>
            <person name="Tanigami A."/>
            <person name="Fujiwara T."/>
            <person name="Ono T."/>
            <person name="Yamada K."/>
            <person name="Fujii Y."/>
            <person name="Ozaki K."/>
            <person name="Hirao M."/>
            <person name="Ohmori Y."/>
            <person name="Kawabata A."/>
            <person name="Hikiji T."/>
            <person name="Kobatake N."/>
            <person name="Inagaki H."/>
            <person name="Ikema Y."/>
            <person name="Okamoto S."/>
            <person name="Okitani R."/>
            <person name="Kawakami T."/>
            <person name="Noguchi S."/>
            <person name="Itoh T."/>
            <person name="Shigeta K."/>
            <person name="Senba T."/>
            <person name="Matsumura K."/>
            <person name="Nakajima Y."/>
            <person name="Mizuno T."/>
            <person name="Morinaga M."/>
            <person name="Sasaki M."/>
            <person name="Togashi T."/>
            <person name="Oyama M."/>
            <person name="Hata H."/>
            <person name="Watanabe M."/>
            <person name="Komatsu T."/>
            <person name="Mizushima-Sugano J."/>
            <person name="Satoh T."/>
            <person name="Shirai Y."/>
            <person name="Takahashi Y."/>
            <person name="Nakagawa K."/>
            <person name="Okumura K."/>
            <person name="Nagase T."/>
            <person name="Nomura N."/>
            <person name="Kikuchi H."/>
            <person name="Masuho Y."/>
            <person name="Yamashita R."/>
            <person name="Nakai K."/>
            <person name="Yada T."/>
            <person name="Nakamura Y."/>
            <person name="Ohara O."/>
            <person name="Isogai T."/>
            <person name="Sugano S."/>
        </authorList>
    </citation>
    <scope>NUCLEOTIDE SEQUENCE [LARGE SCALE MRNA] (ISOFORM 1)</scope>
</reference>
<reference key="5">
    <citation type="journal article" date="2004" name="Nature">
        <title>DNA sequence and analysis of human chromosome 9.</title>
        <authorList>
            <person name="Humphray S.J."/>
            <person name="Oliver K."/>
            <person name="Hunt A.R."/>
            <person name="Plumb R.W."/>
            <person name="Loveland J.E."/>
            <person name="Howe K.L."/>
            <person name="Andrews T.D."/>
            <person name="Searle S."/>
            <person name="Hunt S.E."/>
            <person name="Scott C.E."/>
            <person name="Jones M.C."/>
            <person name="Ainscough R."/>
            <person name="Almeida J.P."/>
            <person name="Ambrose K.D."/>
            <person name="Ashwell R.I.S."/>
            <person name="Babbage A.K."/>
            <person name="Babbage S."/>
            <person name="Bagguley C.L."/>
            <person name="Bailey J."/>
            <person name="Banerjee R."/>
            <person name="Barker D.J."/>
            <person name="Barlow K.F."/>
            <person name="Bates K."/>
            <person name="Beasley H."/>
            <person name="Beasley O."/>
            <person name="Bird C.P."/>
            <person name="Bray-Allen S."/>
            <person name="Brown A.J."/>
            <person name="Brown J.Y."/>
            <person name="Burford D."/>
            <person name="Burrill W."/>
            <person name="Burton J."/>
            <person name="Carder C."/>
            <person name="Carter N.P."/>
            <person name="Chapman J.C."/>
            <person name="Chen Y."/>
            <person name="Clarke G."/>
            <person name="Clark S.Y."/>
            <person name="Clee C.M."/>
            <person name="Clegg S."/>
            <person name="Collier R.E."/>
            <person name="Corby N."/>
            <person name="Crosier M."/>
            <person name="Cummings A.T."/>
            <person name="Davies J."/>
            <person name="Dhami P."/>
            <person name="Dunn M."/>
            <person name="Dutta I."/>
            <person name="Dyer L.W."/>
            <person name="Earthrowl M.E."/>
            <person name="Faulkner L."/>
            <person name="Fleming C.J."/>
            <person name="Frankish A."/>
            <person name="Frankland J.A."/>
            <person name="French L."/>
            <person name="Fricker D.G."/>
            <person name="Garner P."/>
            <person name="Garnett J."/>
            <person name="Ghori J."/>
            <person name="Gilbert J.G.R."/>
            <person name="Glison C."/>
            <person name="Grafham D.V."/>
            <person name="Gribble S."/>
            <person name="Griffiths C."/>
            <person name="Griffiths-Jones S."/>
            <person name="Grocock R."/>
            <person name="Guy J."/>
            <person name="Hall R.E."/>
            <person name="Hammond S."/>
            <person name="Harley J.L."/>
            <person name="Harrison E.S.I."/>
            <person name="Hart E.A."/>
            <person name="Heath P.D."/>
            <person name="Henderson C.D."/>
            <person name="Hopkins B.L."/>
            <person name="Howard P.J."/>
            <person name="Howden P.J."/>
            <person name="Huckle E."/>
            <person name="Johnson C."/>
            <person name="Johnson D."/>
            <person name="Joy A.A."/>
            <person name="Kay M."/>
            <person name="Keenan S."/>
            <person name="Kershaw J.K."/>
            <person name="Kimberley A.M."/>
            <person name="King A."/>
            <person name="Knights A."/>
            <person name="Laird G.K."/>
            <person name="Langford C."/>
            <person name="Lawlor S."/>
            <person name="Leongamornlert D.A."/>
            <person name="Leversha M."/>
            <person name="Lloyd C."/>
            <person name="Lloyd D.M."/>
            <person name="Lovell J."/>
            <person name="Martin S."/>
            <person name="Mashreghi-Mohammadi M."/>
            <person name="Matthews L."/>
            <person name="McLaren S."/>
            <person name="McLay K.E."/>
            <person name="McMurray A."/>
            <person name="Milne S."/>
            <person name="Nickerson T."/>
            <person name="Nisbett J."/>
            <person name="Nordsiek G."/>
            <person name="Pearce A.V."/>
            <person name="Peck A.I."/>
            <person name="Porter K.M."/>
            <person name="Pandian R."/>
            <person name="Pelan S."/>
            <person name="Phillimore B."/>
            <person name="Povey S."/>
            <person name="Ramsey Y."/>
            <person name="Rand V."/>
            <person name="Scharfe M."/>
            <person name="Sehra H.K."/>
            <person name="Shownkeen R."/>
            <person name="Sims S.K."/>
            <person name="Skuce C.D."/>
            <person name="Smith M."/>
            <person name="Steward C.A."/>
            <person name="Swarbreck D."/>
            <person name="Sycamore N."/>
            <person name="Tester J."/>
            <person name="Thorpe A."/>
            <person name="Tracey A."/>
            <person name="Tromans A."/>
            <person name="Thomas D.W."/>
            <person name="Wall M."/>
            <person name="Wallis J.M."/>
            <person name="West A.P."/>
            <person name="Whitehead S.L."/>
            <person name="Willey D.L."/>
            <person name="Williams S.A."/>
            <person name="Wilming L."/>
            <person name="Wray P.W."/>
            <person name="Young L."/>
            <person name="Ashurst J.L."/>
            <person name="Coulson A."/>
            <person name="Blocker H."/>
            <person name="Durbin R.M."/>
            <person name="Sulston J.E."/>
            <person name="Hubbard T."/>
            <person name="Jackson M.J."/>
            <person name="Bentley D.R."/>
            <person name="Beck S."/>
            <person name="Rogers J."/>
            <person name="Dunham I."/>
        </authorList>
    </citation>
    <scope>NUCLEOTIDE SEQUENCE [LARGE SCALE GENOMIC DNA]</scope>
</reference>
<reference key="6">
    <citation type="submission" date="2005-07" db="EMBL/GenBank/DDBJ databases">
        <authorList>
            <person name="Mural R.J."/>
            <person name="Istrail S."/>
            <person name="Sutton G.G."/>
            <person name="Florea L."/>
            <person name="Halpern A.L."/>
            <person name="Mobarry C.M."/>
            <person name="Lippert R."/>
            <person name="Walenz B."/>
            <person name="Shatkay H."/>
            <person name="Dew I."/>
            <person name="Miller J.R."/>
            <person name="Flanigan M.J."/>
            <person name="Edwards N.J."/>
            <person name="Bolanos R."/>
            <person name="Fasulo D."/>
            <person name="Halldorsson B.V."/>
            <person name="Hannenhalli S."/>
            <person name="Turner R."/>
            <person name="Yooseph S."/>
            <person name="Lu F."/>
            <person name="Nusskern D.R."/>
            <person name="Shue B.C."/>
            <person name="Zheng X.H."/>
            <person name="Zhong F."/>
            <person name="Delcher A.L."/>
            <person name="Huson D.H."/>
            <person name="Kravitz S.A."/>
            <person name="Mouchard L."/>
            <person name="Reinert K."/>
            <person name="Remington K.A."/>
            <person name="Clark A.G."/>
            <person name="Waterman M.S."/>
            <person name="Eichler E.E."/>
            <person name="Adams M.D."/>
            <person name="Hunkapiller M.W."/>
            <person name="Myers E.W."/>
            <person name="Venter J.C."/>
        </authorList>
    </citation>
    <scope>NUCLEOTIDE SEQUENCE [LARGE SCALE GENOMIC DNA]</scope>
</reference>
<reference key="7">
    <citation type="journal article" date="2004" name="Genome Res.">
        <title>The status, quality, and expansion of the NIH full-length cDNA project: the Mammalian Gene Collection (MGC).</title>
        <authorList>
            <consortium name="The MGC Project Team"/>
        </authorList>
    </citation>
    <scope>NUCLEOTIDE SEQUENCE [LARGE SCALE MRNA] (ISOFORM 1)</scope>
    <source>
        <tissue>Muscle</tissue>
        <tissue>Testis</tissue>
    </source>
</reference>
<reference key="8">
    <citation type="journal article" date="2003" name="Nature">
        <title>Proteomic characterization of the human centrosome by protein correlation profiling.</title>
        <authorList>
            <person name="Andersen J.S."/>
            <person name="Wilkinson C.J."/>
            <person name="Mayor T."/>
            <person name="Mortensen P."/>
            <person name="Nigg E.A."/>
            <person name="Mann M."/>
        </authorList>
    </citation>
    <scope>IDENTIFICATION BY MASS SPECTROMETRY</scope>
    <source>
        <tissue>Lymphoblast</tissue>
    </source>
</reference>
<reference key="9">
    <citation type="journal article" date="2005" name="Cerebellum">
        <title>The Anp32 family of proteins containing leucine-rich repeats.</title>
        <authorList>
            <person name="Matilla A."/>
            <person name="Radrizzani M."/>
        </authorList>
    </citation>
    <scope>GENE FAMILY</scope>
    <scope>NOMENCLATURE</scope>
</reference>
<reference key="10">
    <citation type="journal article" date="2006" name="Cell">
        <title>Global, in vivo, and site-specific phosphorylation dynamics in signaling networks.</title>
        <authorList>
            <person name="Olsen J.V."/>
            <person name="Blagoev B."/>
            <person name="Gnad F."/>
            <person name="Macek B."/>
            <person name="Kumar C."/>
            <person name="Mortensen P."/>
            <person name="Mann M."/>
        </authorList>
    </citation>
    <scope>PHOSPHORYLATION [LARGE SCALE ANALYSIS] AT THR-244</scope>
    <scope>IDENTIFICATION BY MASS SPECTROMETRY [LARGE SCALE ANALYSIS]</scope>
    <source>
        <tissue>Cervix carcinoma</tissue>
    </source>
</reference>
<reference key="11">
    <citation type="journal article" date="2007" name="J. Biol. Chem.">
        <title>Analysis of nucleocytoplasmic trafficking of the HuR ligand APRIL and its influence on CD83 expression.</title>
        <authorList>
            <person name="Fries B."/>
            <person name="Heukeshoven J."/>
            <person name="Hauber I."/>
            <person name="Gruettner C."/>
            <person name="Stocking C."/>
            <person name="Kehlenbach R.H."/>
            <person name="Hauber J."/>
            <person name="Chemnitz J."/>
        </authorList>
    </citation>
    <scope>FUNCTION</scope>
    <scope>PHOSPHORYLATION AT THR-244</scope>
    <scope>SUBCELLULAR LOCATION</scope>
    <scope>NUCLEAR LOCALIZATION SIGNAL</scope>
</reference>
<reference key="12">
    <citation type="journal article" date="2008" name="Proteomics">
        <title>Large-scale phosphoproteome analysis of human liver tissue by enrichment and fractionation of phosphopeptides with strong anion exchange chromatography.</title>
        <authorList>
            <person name="Han G."/>
            <person name="Ye M."/>
            <person name="Zhou H."/>
            <person name="Jiang X."/>
            <person name="Feng S."/>
            <person name="Jiang X."/>
            <person name="Tian R."/>
            <person name="Wan D."/>
            <person name="Zou H."/>
            <person name="Gu J."/>
        </authorList>
    </citation>
    <scope>PHOSPHORYLATION [LARGE SCALE ANALYSIS] AT THR-244</scope>
    <scope>IDENTIFICATION BY MASS SPECTROMETRY [LARGE SCALE ANALYSIS]</scope>
    <source>
        <tissue>Liver</tissue>
    </source>
</reference>
<reference key="13">
    <citation type="journal article" date="2008" name="Mol. Cell. Biol.">
        <title>Promoter region-specific histone incorporation by the novel histone chaperone ANP32B and DNA-binding factor KLF5.</title>
        <authorList>
            <person name="Munemasa Y."/>
            <person name="Suzuki T."/>
            <person name="Aizawa K."/>
            <person name="Miyamoto S."/>
            <person name="Imai Y."/>
            <person name="Matsumura T."/>
            <person name="Horikoshi M."/>
            <person name="Nagai R."/>
        </authorList>
    </citation>
    <scope>FUNCTION</scope>
    <scope>INTERACTION WITH KLF5</scope>
</reference>
<reference key="14">
    <citation type="journal article" date="2009" name="Science">
        <title>Lysine acetylation targets protein complexes and co-regulates major cellular functions.</title>
        <authorList>
            <person name="Choudhary C."/>
            <person name="Kumar C."/>
            <person name="Gnad F."/>
            <person name="Nielsen M.L."/>
            <person name="Rehman M."/>
            <person name="Walther T.C."/>
            <person name="Olsen J.V."/>
            <person name="Mann M."/>
        </authorList>
    </citation>
    <scope>ACETYLATION [LARGE SCALE ANALYSIS] AT LYS-86</scope>
    <scope>IDENTIFICATION BY MASS SPECTROMETRY [LARGE SCALE ANALYSIS]</scope>
</reference>
<reference key="15">
    <citation type="journal article" date="2010" name="Sci. Signal.">
        <title>Quantitative phosphoproteomics reveals widespread full phosphorylation site occupancy during mitosis.</title>
        <authorList>
            <person name="Olsen J.V."/>
            <person name="Vermeulen M."/>
            <person name="Santamaria A."/>
            <person name="Kumar C."/>
            <person name="Miller M.L."/>
            <person name="Jensen L.J."/>
            <person name="Gnad F."/>
            <person name="Cox J."/>
            <person name="Jensen T.S."/>
            <person name="Nigg E.A."/>
            <person name="Brunak S."/>
            <person name="Mann M."/>
        </authorList>
    </citation>
    <scope>PHOSPHORYLATION [LARGE SCALE ANALYSIS] AT THR-244</scope>
    <scope>IDENTIFICATION BY MASS SPECTROMETRY [LARGE SCALE ANALYSIS]</scope>
    <source>
        <tissue>Cervix carcinoma</tissue>
    </source>
</reference>
<reference key="16">
    <citation type="journal article" date="2010" name="Carcinogenesis">
        <title>Downregulation of ANP32B, a novel substrate of caspase-3, enhances caspase-3 activation and apoptosis induction in myeloid leukemic cells.</title>
        <authorList>
            <person name="Shen S.M."/>
            <person name="Yu Y."/>
            <person name="Wu Y.L."/>
            <person name="Cheng J.K."/>
            <person name="Wang L.S."/>
            <person name="Chen G.Q."/>
        </authorList>
    </citation>
    <scope>FUNCTION</scope>
    <scope>PROTEOLYTIC CLEAVAGE</scope>
    <scope>MUTAGENESIS OF ASP-163</scope>
</reference>
<reference key="17">
    <citation type="journal article" date="2011" name="BMC Syst. Biol.">
        <title>Initial characterization of the human central proteome.</title>
        <authorList>
            <person name="Burkard T.R."/>
            <person name="Planyavsky M."/>
            <person name="Kaupe I."/>
            <person name="Breitwieser F.P."/>
            <person name="Buerckstuemmer T."/>
            <person name="Bennett K.L."/>
            <person name="Superti-Furga G."/>
            <person name="Colinge J."/>
        </authorList>
    </citation>
    <scope>IDENTIFICATION BY MASS SPECTROMETRY [LARGE SCALE ANALYSIS]</scope>
</reference>
<reference key="18">
    <citation type="journal article" date="2011" name="Sci. Signal.">
        <title>System-wide temporal characterization of the proteome and phosphoproteome of human embryonic stem cell differentiation.</title>
        <authorList>
            <person name="Rigbolt K.T."/>
            <person name="Prokhorova T.A."/>
            <person name="Akimov V."/>
            <person name="Henningsen J."/>
            <person name="Johansen P.T."/>
            <person name="Kratchmarova I."/>
            <person name="Kassem M."/>
            <person name="Mann M."/>
            <person name="Olsen J.V."/>
            <person name="Blagoev B."/>
        </authorList>
    </citation>
    <scope>PHOSPHORYLATION [LARGE SCALE ANALYSIS] AT THR-244</scope>
    <scope>IDENTIFICATION BY MASS SPECTROMETRY [LARGE SCALE ANALYSIS]</scope>
</reference>
<reference key="19">
    <citation type="journal article" date="2011" name="J. Virol.">
        <title>Foamy virus nuclear RNA export is distinct from that of other retroviruses.</title>
        <authorList>
            <person name="Bodem J."/>
            <person name="Schied T."/>
            <person name="Gabriel R."/>
            <person name="Rammling M."/>
            <person name="Rethwilm A."/>
        </authorList>
    </citation>
    <scope>FUNCTION (MICROBIAL INFECTION)</scope>
</reference>
<reference key="20">
    <citation type="journal article" date="2013" name="J. Proteome Res.">
        <title>Toward a comprehensive characterization of a human cancer cell phosphoproteome.</title>
        <authorList>
            <person name="Zhou H."/>
            <person name="Di Palma S."/>
            <person name="Preisinger C."/>
            <person name="Peng M."/>
            <person name="Polat A.N."/>
            <person name="Heck A.J."/>
            <person name="Mohammed S."/>
        </authorList>
    </citation>
    <scope>PHOSPHORYLATION [LARGE SCALE ANALYSIS] AT THR-244</scope>
    <scope>IDENTIFICATION BY MASS SPECTROMETRY [LARGE SCALE ANALYSIS]</scope>
    <source>
        <tissue>Erythroleukemia</tissue>
    </source>
</reference>
<reference key="21">
    <citation type="journal article" date="2014" name="J. Proteomics">
        <title>An enzyme assisted RP-RPLC approach for in-depth analysis of human liver phosphoproteome.</title>
        <authorList>
            <person name="Bian Y."/>
            <person name="Song C."/>
            <person name="Cheng K."/>
            <person name="Dong M."/>
            <person name="Wang F."/>
            <person name="Huang J."/>
            <person name="Sun D."/>
            <person name="Wang L."/>
            <person name="Ye M."/>
            <person name="Zou H."/>
        </authorList>
    </citation>
    <scope>PHOSPHORYLATION [LARGE SCALE ANALYSIS] AT THR-244</scope>
    <scope>IDENTIFICATION BY MASS SPECTROMETRY [LARGE SCALE ANALYSIS]</scope>
    <source>
        <tissue>Liver</tissue>
    </source>
</reference>
<reference key="22">
    <citation type="journal article" date="2014" name="PLoS ONE">
        <title>ANP32B is a nuclear target of henipavirus M proteins.</title>
        <authorList>
            <person name="Bauer A."/>
            <person name="Neumann S."/>
            <person name="Karger A."/>
            <person name="Henning A.K."/>
            <person name="Maisner A."/>
            <person name="Lamp B."/>
            <person name="Dietzel E."/>
            <person name="Kwasnitschka L."/>
            <person name="Balkema-Buschmann A."/>
            <person name="Keil G.M."/>
            <person name="Finke S."/>
        </authorList>
    </citation>
    <scope>INTERACTION WITH HENDRA VIRUS PROTEIN M (MICROBIAL INFECTION)</scope>
    <scope>SUBCELLULAR LOCATION</scope>
</reference>
<reference key="23">
    <citation type="journal article" date="2015" name="Proteomics">
        <title>N-terminome analysis of the human mitochondrial proteome.</title>
        <authorList>
            <person name="Vaca Jacome A.S."/>
            <person name="Rabilloud T."/>
            <person name="Schaeffer-Reiss C."/>
            <person name="Rompais M."/>
            <person name="Ayoub D."/>
            <person name="Lane L."/>
            <person name="Bairoch A."/>
            <person name="Van Dorsselaer A."/>
            <person name="Carapito C."/>
        </authorList>
    </citation>
    <scope>IDENTIFICATION BY MASS SPECTROMETRY [LARGE SCALE ANALYSIS]</scope>
</reference>
<reference key="24">
    <citation type="journal article" date="2019" name="J. Virol.">
        <title>ANP32 Proteins Are Essential for Influenza Virus Replication in Human Cells.</title>
        <authorList>
            <person name="Staller E."/>
            <person name="Sheppard C.M."/>
            <person name="Neasham P.J."/>
            <person name="Mistry B."/>
            <person name="Peacock T.P."/>
            <person name="Goldhill D.H."/>
            <person name="Long J.S."/>
            <person name="Barclay W.S."/>
        </authorList>
    </citation>
    <scope>FUNCTION (MICROBIAL INFECTION)</scope>
    <scope>SUBCELLULAR LOCATION</scope>
</reference>
<reference key="25">
    <citation type="journal article" date="2020" name="J. Gen. Virol.">
        <title>Interaction of host cellular factor ANP32B with matrix proteins of different paramyxoviruses.</title>
        <authorList>
            <person name="Guenther M."/>
            <person name="Bauer A."/>
            <person name="Mueller M."/>
            <person name="Zaeck L."/>
            <person name="Finke S."/>
        </authorList>
    </citation>
    <scope>INTERACTION WITH SENDAI VIRUS PROTEIN M AND MEASLES VIRUS PROTEIN M (MICROBIAL INFECTION)</scope>
    <scope>SUBCELLULAR LOCATION</scope>
</reference>
<reference key="26">
    <citation type="journal article" date="2020" name="PLoS Pathog.">
        <title>Selective usage of ANP32 proteins by influenza B virus polymerase: Implications in determination of host range.</title>
        <authorList>
            <person name="Zhang Z."/>
            <person name="Zhang H."/>
            <person name="Xu L."/>
            <person name="Guo X."/>
            <person name="Wang W."/>
            <person name="Ji Y."/>
            <person name="Lin C."/>
            <person name="Wang Y."/>
            <person name="Wang X."/>
        </authorList>
    </citation>
    <scope>FUNCTION (MICROBIAL INFECTION)</scope>
    <scope>INTERACTION WITH INFLUENZA VIRUS B PROTEIN PB2 (MICROBIAL INFECTION)</scope>
</reference>
<reference key="27">
    <citation type="journal article" date="2010" name="J. Mol. Biol.">
        <title>Solution structure of histone chaperone ANP32B: interaction with core histones H3-H4 through its acidic concave domain.</title>
        <authorList>
            <person name="Tochio N."/>
            <person name="Umehara T."/>
            <person name="Munemasa Y."/>
            <person name="Suzuki T."/>
            <person name="Sato S."/>
            <person name="Tsuda K."/>
            <person name="Koshiba S."/>
            <person name="Kigawa T."/>
            <person name="Nagai R."/>
            <person name="Yokoyama S."/>
        </authorList>
    </citation>
    <scope>STRUCTURE BY NMR OF 1-161</scope>
    <scope>FUNCTION</scope>
    <scope>SUBUNIT</scope>
    <scope>INTERACTION WITH HISTONES H3 AND H4</scope>
    <scope>LEUCINE-RICH REPEATS</scope>
</reference>
<evidence type="ECO:0000250" key="1"/>
<evidence type="ECO:0000250" key="2">
    <source>
        <dbReference type="UniProtKB" id="Q9EST5"/>
    </source>
</evidence>
<evidence type="ECO:0000250" key="3">
    <source>
        <dbReference type="UniProtKB" id="Q9EST6"/>
    </source>
</evidence>
<evidence type="ECO:0000256" key="4">
    <source>
        <dbReference type="SAM" id="MobiDB-lite"/>
    </source>
</evidence>
<evidence type="ECO:0000269" key="5">
    <source>
    </source>
</evidence>
<evidence type="ECO:0000269" key="6">
    <source>
    </source>
</evidence>
<evidence type="ECO:0000269" key="7">
    <source>
    </source>
</evidence>
<evidence type="ECO:0000269" key="8">
    <source>
    </source>
</evidence>
<evidence type="ECO:0000269" key="9">
    <source>
    </source>
</evidence>
<evidence type="ECO:0000269" key="10">
    <source>
    </source>
</evidence>
<evidence type="ECO:0000269" key="11">
    <source>
    </source>
</evidence>
<evidence type="ECO:0000269" key="12">
    <source>
    </source>
</evidence>
<evidence type="ECO:0000269" key="13">
    <source>
    </source>
</evidence>
<evidence type="ECO:0000269" key="14">
    <source>
    </source>
</evidence>
<evidence type="ECO:0000303" key="15">
    <source>
    </source>
</evidence>
<evidence type="ECO:0000303" key="16">
    <source>
    </source>
</evidence>
<evidence type="ECO:0000305" key="17"/>
<evidence type="ECO:0007744" key="18">
    <source>
    </source>
</evidence>
<evidence type="ECO:0007744" key="19">
    <source>
    </source>
</evidence>
<evidence type="ECO:0007744" key="20">
    <source>
    </source>
</evidence>
<evidence type="ECO:0007744" key="21">
    <source>
    </source>
</evidence>
<evidence type="ECO:0007744" key="22">
    <source>
    </source>
</evidence>
<evidence type="ECO:0007744" key="23">
    <source>
    </source>
</evidence>
<evidence type="ECO:0007744" key="24">
    <source>
    </source>
</evidence>
<evidence type="ECO:0007829" key="25">
    <source>
        <dbReference type="PDB" id="2ELL"/>
    </source>
</evidence>
<evidence type="ECO:0007829" key="26">
    <source>
        <dbReference type="PDB" id="8R1J"/>
    </source>
</evidence>
<evidence type="ECO:0007829" key="27">
    <source>
        <dbReference type="PDB" id="8R1L"/>
    </source>
</evidence>
<name>AN32B_HUMAN</name>
<comment type="function">
    <text evidence="2 5 6 7 8">Multifunctional protein that is involved in the regulation of many processes including cell proliferation, apoptosis, cell cycle progression or transcription (PubMed:18039846, PubMed:20015864). Regulates the proliferation of neuronal stem cells, differentiation of leukemic cells and progression from G1 to S phase of the cell cycle. As negative regulator of caspase-3-dependent apoptosis, may act as an antagonist of ANP32A in regulating tissue homeostasis (PubMed:20015864). Exhibits histone chaperone properties, able to recruit histones to certain promoters, thus regulating the transcription of specific genes (PubMed:18039846, PubMed:20538007). Also plays an essential role in the nucleocytoplasmic transport of specific mRNAs via the uncommon nuclear mRNA export receptor XPO1/CRM1 (PubMed:17178712). Participates in the regulation of adequate adaptive immune responses by acting on mRNA expression and cell proliferation (By similarity).</text>
</comment>
<comment type="function">
    <text evidence="9 11 13">(Microbial infection) Plays an essential role in influenza A and B viral genome replication (PubMed:31217244, PubMed:33045004). Also plays a role in foamy virus mRNA export from the nucleus to the cytoplasm (PubMed:21159877).</text>
</comment>
<comment type="subunit">
    <text evidence="6 8">Interacts with histones H3 and H4 (PubMed:20538007). Interacts with KLF5; this interaction induces promoter region-specific histone incorporation and inhibition of histone acetylation by ANP32B (PubMed:18039846).</text>
</comment>
<comment type="subunit">
    <text evidence="12">(Microbial infection) Interacts with Sendai virus protein M.</text>
</comment>
<comment type="subunit">
    <text evidence="12">(Microbial infection) Interacts with Measles virus protein M.</text>
</comment>
<comment type="subunit">
    <text evidence="10">(Microbial infection) Interacts with Hendra virus protein M; this interaction promotes nuclear localization of M.</text>
</comment>
<comment type="subunit">
    <text evidence="13">(Microbial infection) Interacts with influenza virus B protein PB2; this interaction strongly supports influenza B virus replication.</text>
</comment>
<comment type="interaction">
    <interactant intactId="EBI-762428">
        <id>Q92688</id>
    </interactant>
    <interactant intactId="EBI-10181188">
        <id>Q8N7W2-2</id>
        <label>BEND7</label>
    </interactant>
    <organismsDiffer>false</organismsDiffer>
    <experiments>3</experiments>
</comment>
<comment type="interaction">
    <interactant intactId="EBI-762428">
        <id>Q92688</id>
    </interactant>
    <interactant intactId="EBI-2795449">
        <id>Q9H147</id>
        <label>DNTTIP1</label>
    </interactant>
    <organismsDiffer>false</organismsDiffer>
    <experiments>3</experiments>
</comment>
<comment type="interaction">
    <interactant intactId="EBI-762428">
        <id>Q92688</id>
    </interactant>
    <interactant intactId="EBI-19153639">
        <id>Q9NTX9</id>
        <label>FAM217B</label>
    </interactant>
    <organismsDiffer>false</organismsDiffer>
    <experiments>3</experiments>
</comment>
<comment type="interaction">
    <interactant intactId="EBI-762428">
        <id>Q92688</id>
    </interactant>
    <interactant intactId="EBI-352682">
        <id>P04792</id>
        <label>HSPB1</label>
    </interactant>
    <organismsDiffer>false</organismsDiffer>
    <experiments>3</experiments>
</comment>
<comment type="interaction">
    <interactant intactId="EBI-762428">
        <id>Q92688</id>
    </interactant>
    <interactant intactId="EBI-10975473">
        <id>O60333-2</id>
        <label>KIF1B</label>
    </interactant>
    <organismsDiffer>false</organismsDiffer>
    <experiments>3</experiments>
</comment>
<comment type="interaction">
    <interactant intactId="EBI-762428">
        <id>Q92688</id>
    </interactant>
    <interactant intactId="EBI-358383">
        <id>P52294</id>
        <label>KPNA1</label>
    </interactant>
    <organismsDiffer>false</organismsDiffer>
    <experiments>9</experiments>
</comment>
<comment type="interaction">
    <interactant intactId="EBI-762428">
        <id>Q92688</id>
    </interactant>
    <interactant intactId="EBI-540602">
        <id>O15131</id>
        <label>KPNA5</label>
    </interactant>
    <organismsDiffer>false</organismsDiffer>
    <experiments>7</experiments>
</comment>
<comment type="interaction">
    <interactant intactId="EBI-762428">
        <id>Q92688</id>
    </interactant>
    <interactant intactId="EBI-359923">
        <id>O60684</id>
        <label>KPNA6</label>
    </interactant>
    <organismsDiffer>false</organismsDiffer>
    <experiments>4</experiments>
</comment>
<comment type="interaction">
    <interactant intactId="EBI-762428">
        <id>Q92688</id>
    </interactant>
    <interactant intactId="EBI-748397">
        <id>P50222</id>
        <label>MEOX2</label>
    </interactant>
    <organismsDiffer>false</organismsDiffer>
    <experiments>3</experiments>
</comment>
<comment type="interaction">
    <interactant intactId="EBI-762428">
        <id>Q92688</id>
    </interactant>
    <interactant intactId="EBI-3446748">
        <id>Q9NPC7</id>
        <label>MYNN</label>
    </interactant>
    <organismsDiffer>false</organismsDiffer>
    <experiments>3</experiments>
</comment>
<comment type="interaction">
    <interactant intactId="EBI-762428">
        <id>Q92688</id>
    </interactant>
    <interactant intactId="EBI-727004">
        <id>O00560</id>
        <label>SDCBP</label>
    </interactant>
    <organismsDiffer>false</organismsDiffer>
    <experiments>6</experiments>
</comment>
<comment type="interaction">
    <interactant intactId="EBI-762428">
        <id>Q92688</id>
    </interactant>
    <interactant intactId="EBI-720609">
        <id>O76024</id>
        <label>WFS1</label>
    </interactant>
    <organismsDiffer>false</organismsDiffer>
    <experiments>3</experiments>
</comment>
<comment type="interaction">
    <interactant intactId="EBI-762428">
        <id>Q92688</id>
    </interactant>
    <interactant intactId="EBI-12111538">
        <id>Q8IY57-5</id>
        <label>YAF2</label>
    </interactant>
    <organismsDiffer>false</organismsDiffer>
    <experiments>3</experiments>
</comment>
<comment type="subcellular location">
    <molecule>Isoform 1</molecule>
    <subcellularLocation>
        <location evidence="5 10 11">Nucleus</location>
    </subcellularLocation>
    <subcellularLocation>
        <location evidence="5">Cytoplasm</location>
    </subcellularLocation>
    <text evidence="1">Accumulates in the nuclei at the S phase.</text>
</comment>
<comment type="subcellular location">
    <molecule>Isoform 2</molecule>
    <subcellularLocation>
        <location>Cytoplasm</location>
    </subcellularLocation>
    <text>Lacks a nuclear localization signal.</text>
</comment>
<comment type="alternative products">
    <event type="alternative splicing"/>
    <isoform>
        <id>Q92688-1</id>
        <name>1</name>
        <name>Anp32b1</name>
        <name>PHAPI2b</name>
        <sequence type="displayed"/>
    </isoform>
    <isoform>
        <id>Q92688-2</id>
        <name>2</name>
        <name>Anp32b2</name>
        <name>PHAPI2b</name>
        <sequence type="described" ref="VSP_019304"/>
    </isoform>
</comment>
<comment type="tissue specificity">
    <text evidence="14">Expressed in heart, lung, pancreas, prostate and in spleen, thymus and placenta.</text>
</comment>
<comment type="domain">
    <text>Histone binding is mediated by the concave surface of the LRR region.</text>
</comment>
<comment type="PTM">
    <text evidence="1">Some glutamate residues are glycylated by TTLL8. This modification occurs exclusively on glutamate residues and results in a glycine chain on the gamma-carboxyl group (By similarity).</text>
</comment>
<comment type="PTM">
    <text evidence="7">Directly cleaved by caspase-3/CASP3.</text>
</comment>
<comment type="miscellaneous">
    <molecule>Isoform 2</molecule>
    <text evidence="17">No canonical donor splice site.</text>
</comment>
<comment type="similarity">
    <text evidence="17">Belongs to the ANP32 family.</text>
</comment>
<dbReference type="EMBL" id="Y07569">
    <property type="protein sequence ID" value="CAA68855.1"/>
    <property type="molecule type" value="mRNA"/>
</dbReference>
<dbReference type="EMBL" id="U70439">
    <property type="protein sequence ID" value="AAB37579.1"/>
    <property type="molecule type" value="mRNA"/>
</dbReference>
<dbReference type="EMBL" id="Y07969">
    <property type="protein sequence ID" value="CAA69265.1"/>
    <property type="molecule type" value="mRNA"/>
</dbReference>
<dbReference type="EMBL" id="Y07570">
    <property type="protein sequence ID" value="CAA68856.1"/>
    <property type="molecule type" value="mRNA"/>
</dbReference>
<dbReference type="EMBL" id="AK313733">
    <property type="protein sequence ID" value="BAG36474.1"/>
    <property type="molecule type" value="mRNA"/>
</dbReference>
<dbReference type="EMBL" id="AL354726">
    <property type="status" value="NOT_ANNOTATED_CDS"/>
    <property type="molecule type" value="Genomic_DNA"/>
</dbReference>
<dbReference type="EMBL" id="CH471105">
    <property type="protein sequence ID" value="EAW58865.1"/>
    <property type="molecule type" value="Genomic_DNA"/>
</dbReference>
<dbReference type="EMBL" id="BC013003">
    <property type="protein sequence ID" value="AAH13003.1"/>
    <property type="molecule type" value="mRNA"/>
</dbReference>
<dbReference type="EMBL" id="BC019658">
    <property type="protein sequence ID" value="AAH19658.1"/>
    <property type="molecule type" value="mRNA"/>
</dbReference>
<dbReference type="CCDS" id="CCDS6732.1">
    <molecule id="Q92688-1"/>
</dbReference>
<dbReference type="RefSeq" id="NP_006392.1">
    <molecule id="Q92688-1"/>
    <property type="nucleotide sequence ID" value="NM_006401.3"/>
</dbReference>
<dbReference type="PDB" id="2ELL">
    <property type="method" value="NMR"/>
    <property type="chains" value="A=1-161"/>
</dbReference>
<dbReference type="PDB" id="2RR6">
    <property type="method" value="NMR"/>
    <property type="chains" value="A=1-161"/>
</dbReference>
<dbReference type="PDB" id="8R1J">
    <property type="method" value="EM"/>
    <property type="resolution" value="3.20 A"/>
    <property type="chains" value="G=1-251"/>
</dbReference>
<dbReference type="PDB" id="8R1L">
    <property type="method" value="EM"/>
    <property type="resolution" value="3.10 A"/>
    <property type="chains" value="D=1-251"/>
</dbReference>
<dbReference type="PDBsum" id="2ELL"/>
<dbReference type="PDBsum" id="2RR6"/>
<dbReference type="PDBsum" id="8R1J"/>
<dbReference type="PDBsum" id="8R1L"/>
<dbReference type="BMRB" id="Q92688"/>
<dbReference type="EMDB" id="EMD-18818"/>
<dbReference type="EMDB" id="EMD-18822"/>
<dbReference type="SMR" id="Q92688"/>
<dbReference type="BioGRID" id="115795">
    <property type="interactions" value="163"/>
</dbReference>
<dbReference type="CORUM" id="Q92688"/>
<dbReference type="FunCoup" id="Q92688">
    <property type="interactions" value="3580"/>
</dbReference>
<dbReference type="IntAct" id="Q92688">
    <property type="interactions" value="66"/>
</dbReference>
<dbReference type="MINT" id="Q92688"/>
<dbReference type="STRING" id="9606.ENSP00000345848"/>
<dbReference type="ChEMBL" id="CHEMBL4295917"/>
<dbReference type="CarbonylDB" id="Q92688"/>
<dbReference type="GlyGen" id="Q92688">
    <property type="glycosylation" value="2 sites, 1 N-linked glycan (1 site), 1 O-linked glycan (1 site)"/>
</dbReference>
<dbReference type="iPTMnet" id="Q92688"/>
<dbReference type="MetOSite" id="Q92688"/>
<dbReference type="PhosphoSitePlus" id="Q92688"/>
<dbReference type="SwissPalm" id="Q92688"/>
<dbReference type="BioMuta" id="ANP32B"/>
<dbReference type="DMDM" id="26390818"/>
<dbReference type="CPTAC" id="CPTAC-1595"/>
<dbReference type="jPOST" id="Q92688"/>
<dbReference type="MassIVE" id="Q92688"/>
<dbReference type="PaxDb" id="9606-ENSP00000345848"/>
<dbReference type="PeptideAtlas" id="Q92688"/>
<dbReference type="ProteomicsDB" id="75409">
    <molecule id="Q92688-1"/>
</dbReference>
<dbReference type="ProteomicsDB" id="75410">
    <molecule id="Q92688-2"/>
</dbReference>
<dbReference type="Pumba" id="Q92688"/>
<dbReference type="TopDownProteomics" id="Q92688-1">
    <molecule id="Q92688-1"/>
</dbReference>
<dbReference type="TopDownProteomics" id="Q92688-2">
    <molecule id="Q92688-2"/>
</dbReference>
<dbReference type="Antibodypedia" id="28919">
    <property type="antibodies" value="291 antibodies from 32 providers"/>
</dbReference>
<dbReference type="DNASU" id="10541"/>
<dbReference type="Ensembl" id="ENST00000339399.5">
    <molecule id="Q92688-1"/>
    <property type="protein sequence ID" value="ENSP00000345848.4"/>
    <property type="gene ID" value="ENSG00000136938.9"/>
</dbReference>
<dbReference type="GeneID" id="10541"/>
<dbReference type="KEGG" id="hsa:10541"/>
<dbReference type="MANE-Select" id="ENST00000339399.5">
    <property type="protein sequence ID" value="ENSP00000345848.4"/>
    <property type="RefSeq nucleotide sequence ID" value="NM_006401.3"/>
    <property type="RefSeq protein sequence ID" value="NP_006392.1"/>
</dbReference>
<dbReference type="UCSC" id="uc004aya.4">
    <molecule id="Q92688-1"/>
    <property type="organism name" value="human"/>
</dbReference>
<dbReference type="AGR" id="HGNC:16677"/>
<dbReference type="CTD" id="10541"/>
<dbReference type="DisGeNET" id="10541"/>
<dbReference type="GeneCards" id="ANP32B"/>
<dbReference type="HGNC" id="HGNC:16677">
    <property type="gene designation" value="ANP32B"/>
</dbReference>
<dbReference type="HPA" id="ENSG00000136938">
    <property type="expression patterns" value="Low tissue specificity"/>
</dbReference>
<dbReference type="MIM" id="619823">
    <property type="type" value="gene"/>
</dbReference>
<dbReference type="neXtProt" id="NX_Q92688"/>
<dbReference type="OpenTargets" id="ENSG00000136938"/>
<dbReference type="PharmGKB" id="PA24812"/>
<dbReference type="VEuPathDB" id="HostDB:ENSG00000136938"/>
<dbReference type="eggNOG" id="KOG2739">
    <property type="taxonomic scope" value="Eukaryota"/>
</dbReference>
<dbReference type="GeneTree" id="ENSGT00950000182907"/>
<dbReference type="HOGENOM" id="CLU_063314_1_1_1"/>
<dbReference type="InParanoid" id="Q92688"/>
<dbReference type="OMA" id="MPNNQVS"/>
<dbReference type="OrthoDB" id="2160613at2759"/>
<dbReference type="PAN-GO" id="Q92688">
    <property type="GO annotations" value="3 GO annotations based on evolutionary models"/>
</dbReference>
<dbReference type="PhylomeDB" id="Q92688"/>
<dbReference type="TreeFam" id="TF317206"/>
<dbReference type="PathwayCommons" id="Q92688"/>
<dbReference type="SignaLink" id="Q92688"/>
<dbReference type="SIGNOR" id="Q92688"/>
<dbReference type="BioGRID-ORCS" id="10541">
    <property type="hits" value="54 hits in 1133 CRISPR screens"/>
</dbReference>
<dbReference type="ChiTaRS" id="ANP32B">
    <property type="organism name" value="human"/>
</dbReference>
<dbReference type="EvolutionaryTrace" id="Q92688"/>
<dbReference type="GeneWiki" id="ANP32B"/>
<dbReference type="GenomeRNAi" id="10541"/>
<dbReference type="Pharos" id="Q92688">
    <property type="development level" value="Tbio"/>
</dbReference>
<dbReference type="PRO" id="PR:Q92688"/>
<dbReference type="Proteomes" id="UP000005640">
    <property type="component" value="Chromosome 9"/>
</dbReference>
<dbReference type="RNAct" id="Q92688">
    <property type="molecule type" value="protein"/>
</dbReference>
<dbReference type="Bgee" id="ENSG00000136938">
    <property type="expression patterns" value="Expressed in tendon of biceps brachii and 218 other cell types or tissues"/>
</dbReference>
<dbReference type="GO" id="GO:0005737">
    <property type="term" value="C:cytoplasm"/>
    <property type="evidence" value="ECO:0000314"/>
    <property type="project" value="UniProtKB"/>
</dbReference>
<dbReference type="GO" id="GO:0070062">
    <property type="term" value="C:extracellular exosome"/>
    <property type="evidence" value="ECO:0007005"/>
    <property type="project" value="UniProtKB"/>
</dbReference>
<dbReference type="GO" id="GO:0005654">
    <property type="term" value="C:nucleoplasm"/>
    <property type="evidence" value="ECO:0000314"/>
    <property type="project" value="HPA"/>
</dbReference>
<dbReference type="GO" id="GO:0005634">
    <property type="term" value="C:nucleus"/>
    <property type="evidence" value="ECO:0000314"/>
    <property type="project" value="UniProtKB"/>
</dbReference>
<dbReference type="GO" id="GO:0042393">
    <property type="term" value="F:histone binding"/>
    <property type="evidence" value="ECO:0000314"/>
    <property type="project" value="UniProtKB"/>
</dbReference>
<dbReference type="GO" id="GO:0070063">
    <property type="term" value="F:RNA polymerase binding"/>
    <property type="evidence" value="ECO:0000314"/>
    <property type="project" value="UniProtKB"/>
</dbReference>
<dbReference type="GO" id="GO:0048839">
    <property type="term" value="P:inner ear development"/>
    <property type="evidence" value="ECO:0007669"/>
    <property type="project" value="Ensembl"/>
</dbReference>
<dbReference type="GO" id="GO:0043066">
    <property type="term" value="P:negative regulation of apoptotic process"/>
    <property type="evidence" value="ECO:0000315"/>
    <property type="project" value="UniProtKB"/>
</dbReference>
<dbReference type="GO" id="GO:0045596">
    <property type="term" value="P:negative regulation of cell differentiation"/>
    <property type="evidence" value="ECO:0000314"/>
    <property type="project" value="UniProtKB"/>
</dbReference>
<dbReference type="GO" id="GO:0006334">
    <property type="term" value="P:nucleosome assembly"/>
    <property type="evidence" value="ECO:0000314"/>
    <property type="project" value="UniProtKB"/>
</dbReference>
<dbReference type="GO" id="GO:0046827">
    <property type="term" value="P:positive regulation of protein export from nucleus"/>
    <property type="evidence" value="ECO:0000315"/>
    <property type="project" value="UniProtKB"/>
</dbReference>
<dbReference type="GO" id="GO:0042981">
    <property type="term" value="P:regulation of apoptotic process"/>
    <property type="evidence" value="ECO:0000318"/>
    <property type="project" value="GO_Central"/>
</dbReference>
<dbReference type="GO" id="GO:0060021">
    <property type="term" value="P:roof of mouth development"/>
    <property type="evidence" value="ECO:0007669"/>
    <property type="project" value="Ensembl"/>
</dbReference>
<dbReference type="GO" id="GO:0001944">
    <property type="term" value="P:vasculature development"/>
    <property type="evidence" value="ECO:0007669"/>
    <property type="project" value="Ensembl"/>
</dbReference>
<dbReference type="GO" id="GO:0021591">
    <property type="term" value="P:ventricular system development"/>
    <property type="evidence" value="ECO:0007669"/>
    <property type="project" value="Ensembl"/>
</dbReference>
<dbReference type="FunFam" id="3.80.10.10:FF:000003">
    <property type="entry name" value="Acidic leucine-rich nuclear phosphoprotein 32 family member A"/>
    <property type="match status" value="1"/>
</dbReference>
<dbReference type="Gene3D" id="3.80.10.10">
    <property type="entry name" value="Ribonuclease Inhibitor"/>
    <property type="match status" value="1"/>
</dbReference>
<dbReference type="InterPro" id="IPR045081">
    <property type="entry name" value="AN32"/>
</dbReference>
<dbReference type="InterPro" id="IPR001611">
    <property type="entry name" value="Leu-rich_rpt"/>
</dbReference>
<dbReference type="InterPro" id="IPR032675">
    <property type="entry name" value="LRR_dom_sf"/>
</dbReference>
<dbReference type="InterPro" id="IPR003603">
    <property type="entry name" value="U2A'_phosphoprotein32A_C"/>
</dbReference>
<dbReference type="PANTHER" id="PTHR11375">
    <property type="entry name" value="ACIDIC LEUCINE-RICH NUCLEAR PHOSPHOPROTEIN 32"/>
    <property type="match status" value="1"/>
</dbReference>
<dbReference type="PANTHER" id="PTHR11375:SF2">
    <property type="entry name" value="ACIDIC LEUCINE-RICH NUCLEAR PHOSPHOPROTEIN 32 FAMILY MEMBER B"/>
    <property type="match status" value="1"/>
</dbReference>
<dbReference type="Pfam" id="PF14580">
    <property type="entry name" value="LRR_9"/>
    <property type="match status" value="1"/>
</dbReference>
<dbReference type="SMART" id="SM00446">
    <property type="entry name" value="LRRcap"/>
    <property type="match status" value="1"/>
</dbReference>
<dbReference type="SUPFAM" id="SSF52058">
    <property type="entry name" value="L domain-like"/>
    <property type="match status" value="1"/>
</dbReference>
<dbReference type="PROSITE" id="PS51450">
    <property type="entry name" value="LRR"/>
    <property type="match status" value="4"/>
</dbReference>